<evidence type="ECO:0000250" key="1"/>
<evidence type="ECO:0000256" key="2">
    <source>
        <dbReference type="SAM" id="MobiDB-lite"/>
    </source>
</evidence>
<evidence type="ECO:0000305" key="3"/>
<proteinExistence type="inferred from homology"/>
<dbReference type="EMBL" id="CP000454">
    <property type="protein sequence ID" value="ABK02873.1"/>
    <property type="molecule type" value="Genomic_DNA"/>
</dbReference>
<dbReference type="RefSeq" id="WP_011691339.1">
    <property type="nucleotide sequence ID" value="NC_008541.1"/>
</dbReference>
<dbReference type="SMR" id="A0JV03"/>
<dbReference type="STRING" id="290399.Arth_1479"/>
<dbReference type="KEGG" id="art:Arth_1479"/>
<dbReference type="eggNOG" id="COG0292">
    <property type="taxonomic scope" value="Bacteria"/>
</dbReference>
<dbReference type="HOGENOM" id="CLU_123265_0_0_11"/>
<dbReference type="OrthoDB" id="9808966at2"/>
<dbReference type="Proteomes" id="UP000000754">
    <property type="component" value="Chromosome"/>
</dbReference>
<dbReference type="GO" id="GO:1990904">
    <property type="term" value="C:ribonucleoprotein complex"/>
    <property type="evidence" value="ECO:0007669"/>
    <property type="project" value="UniProtKB-KW"/>
</dbReference>
<dbReference type="GO" id="GO:0005840">
    <property type="term" value="C:ribosome"/>
    <property type="evidence" value="ECO:0007669"/>
    <property type="project" value="UniProtKB-KW"/>
</dbReference>
<dbReference type="GO" id="GO:0019843">
    <property type="term" value="F:rRNA binding"/>
    <property type="evidence" value="ECO:0007669"/>
    <property type="project" value="UniProtKB-UniRule"/>
</dbReference>
<dbReference type="GO" id="GO:0003735">
    <property type="term" value="F:structural constituent of ribosome"/>
    <property type="evidence" value="ECO:0007669"/>
    <property type="project" value="InterPro"/>
</dbReference>
<dbReference type="GO" id="GO:0000027">
    <property type="term" value="P:ribosomal large subunit assembly"/>
    <property type="evidence" value="ECO:0007669"/>
    <property type="project" value="UniProtKB-UniRule"/>
</dbReference>
<dbReference type="GO" id="GO:0006412">
    <property type="term" value="P:translation"/>
    <property type="evidence" value="ECO:0007669"/>
    <property type="project" value="InterPro"/>
</dbReference>
<dbReference type="CDD" id="cd07026">
    <property type="entry name" value="Ribosomal_L20"/>
    <property type="match status" value="1"/>
</dbReference>
<dbReference type="FunFam" id="1.10.1900.20:FF:000001">
    <property type="entry name" value="50S ribosomal protein L20"/>
    <property type="match status" value="1"/>
</dbReference>
<dbReference type="Gene3D" id="6.10.160.10">
    <property type="match status" value="1"/>
</dbReference>
<dbReference type="Gene3D" id="1.10.1900.20">
    <property type="entry name" value="Ribosomal protein L20"/>
    <property type="match status" value="1"/>
</dbReference>
<dbReference type="HAMAP" id="MF_00382">
    <property type="entry name" value="Ribosomal_bL20"/>
    <property type="match status" value="1"/>
</dbReference>
<dbReference type="InterPro" id="IPR005813">
    <property type="entry name" value="Ribosomal_bL20"/>
</dbReference>
<dbReference type="InterPro" id="IPR049946">
    <property type="entry name" value="RIBOSOMAL_L20_CS"/>
</dbReference>
<dbReference type="InterPro" id="IPR035566">
    <property type="entry name" value="Ribosomal_protein_bL20_C"/>
</dbReference>
<dbReference type="NCBIfam" id="TIGR01032">
    <property type="entry name" value="rplT_bact"/>
    <property type="match status" value="1"/>
</dbReference>
<dbReference type="PANTHER" id="PTHR10986">
    <property type="entry name" value="39S RIBOSOMAL PROTEIN L20"/>
    <property type="match status" value="1"/>
</dbReference>
<dbReference type="Pfam" id="PF00453">
    <property type="entry name" value="Ribosomal_L20"/>
    <property type="match status" value="1"/>
</dbReference>
<dbReference type="PRINTS" id="PR00062">
    <property type="entry name" value="RIBOSOMALL20"/>
</dbReference>
<dbReference type="SUPFAM" id="SSF74731">
    <property type="entry name" value="Ribosomal protein L20"/>
    <property type="match status" value="1"/>
</dbReference>
<dbReference type="PROSITE" id="PS00937">
    <property type="entry name" value="RIBOSOMAL_L20"/>
    <property type="match status" value="1"/>
</dbReference>
<accession>A0JV03</accession>
<feature type="chain" id="PRO_0000355480" description="Large ribosomal subunit protein bL20">
    <location>
        <begin position="1"/>
        <end position="157"/>
    </location>
</feature>
<feature type="region of interest" description="Disordered" evidence="2">
    <location>
        <begin position="121"/>
        <end position="157"/>
    </location>
</feature>
<feature type="compositionally biased region" description="Low complexity" evidence="2">
    <location>
        <begin position="122"/>
        <end position="134"/>
    </location>
</feature>
<feature type="compositionally biased region" description="Basic residues" evidence="2">
    <location>
        <begin position="135"/>
        <end position="147"/>
    </location>
</feature>
<protein>
    <recommendedName>
        <fullName evidence="3">Large ribosomal subunit protein bL20</fullName>
    </recommendedName>
    <alternativeName>
        <fullName>50S ribosomal protein L20</fullName>
    </alternativeName>
</protein>
<name>RL20_ARTS2</name>
<reference key="1">
    <citation type="journal article" date="2013" name="Stand. Genomic Sci.">
        <title>Complete genome sequence of Arthrobacter sp. strain FB24.</title>
        <authorList>
            <person name="Nakatsu C.H."/>
            <person name="Barabote R."/>
            <person name="Thompson S."/>
            <person name="Bruce D."/>
            <person name="Detter C."/>
            <person name="Brettin T."/>
            <person name="Han C."/>
            <person name="Beasley F."/>
            <person name="Chen W."/>
            <person name="Konopka A."/>
            <person name="Xie G."/>
        </authorList>
    </citation>
    <scope>NUCLEOTIDE SEQUENCE [LARGE SCALE GENOMIC DNA]</scope>
    <source>
        <strain>FB24</strain>
    </source>
</reference>
<keyword id="KW-1185">Reference proteome</keyword>
<keyword id="KW-0687">Ribonucleoprotein</keyword>
<keyword id="KW-0689">Ribosomal protein</keyword>
<keyword id="KW-0694">RNA-binding</keyword>
<keyword id="KW-0699">rRNA-binding</keyword>
<sequence length="157" mass="17324">MARVKRAVNAHKKRRVILERAKGYRGQRSRLYRKAKEQLLHSFVYSYGDRKKKKGDFRRLWIQRINAASRANGLTYNRLIQGLKAAEVEVDRRMLAELAVSDANAFAALVQVAKDSLPADTSAPAVSAEAAPKAKAAKKPAAKKAAAKKPVAEEAAK</sequence>
<comment type="function">
    <text evidence="1">Binds directly to 23S ribosomal RNA and is necessary for the in vitro assembly process of the 50S ribosomal subunit. It is not involved in the protein synthesizing functions of that subunit (By similarity).</text>
</comment>
<comment type="similarity">
    <text evidence="3">Belongs to the bacterial ribosomal protein bL20 family.</text>
</comment>
<gene>
    <name type="primary">rplT</name>
    <name type="ordered locus">Arth_1479</name>
</gene>
<organism>
    <name type="scientific">Arthrobacter sp. (strain FB24)</name>
    <dbReference type="NCBI Taxonomy" id="290399"/>
    <lineage>
        <taxon>Bacteria</taxon>
        <taxon>Bacillati</taxon>
        <taxon>Actinomycetota</taxon>
        <taxon>Actinomycetes</taxon>
        <taxon>Micrococcales</taxon>
        <taxon>Micrococcaceae</taxon>
        <taxon>Arthrobacter</taxon>
    </lineage>
</organism>